<feature type="chain" id="PRO_1000062559" description="Urease accessory protein UreE">
    <location>
        <begin position="1"/>
        <end position="211"/>
    </location>
</feature>
<feature type="region of interest" description="Disordered" evidence="2">
    <location>
        <begin position="134"/>
        <end position="211"/>
    </location>
</feature>
<feature type="compositionally biased region" description="Basic and acidic residues" evidence="2">
    <location>
        <begin position="147"/>
        <end position="202"/>
    </location>
</feature>
<proteinExistence type="inferred from homology"/>
<organism>
    <name type="scientific">Rhodopseudomonas palustris (strain BisB18)</name>
    <dbReference type="NCBI Taxonomy" id="316056"/>
    <lineage>
        <taxon>Bacteria</taxon>
        <taxon>Pseudomonadati</taxon>
        <taxon>Pseudomonadota</taxon>
        <taxon>Alphaproteobacteria</taxon>
        <taxon>Hyphomicrobiales</taxon>
        <taxon>Nitrobacteraceae</taxon>
        <taxon>Rhodopseudomonas</taxon>
    </lineage>
</organism>
<comment type="function">
    <text evidence="1">Involved in urease metallocenter assembly. Binds nickel. Probably functions as a nickel donor during metallocenter assembly.</text>
</comment>
<comment type="subcellular location">
    <subcellularLocation>
        <location evidence="1">Cytoplasm</location>
    </subcellularLocation>
</comment>
<comment type="similarity">
    <text evidence="1">Belongs to the UreE family.</text>
</comment>
<protein>
    <recommendedName>
        <fullName evidence="1">Urease accessory protein UreE</fullName>
    </recommendedName>
</protein>
<dbReference type="EMBL" id="CP000301">
    <property type="protein sequence ID" value="ABD89226.1"/>
    <property type="molecule type" value="Genomic_DNA"/>
</dbReference>
<dbReference type="SMR" id="Q210G0"/>
<dbReference type="STRING" id="316056.RPC_3691"/>
<dbReference type="KEGG" id="rpc:RPC_3691"/>
<dbReference type="eggNOG" id="COG2371">
    <property type="taxonomic scope" value="Bacteria"/>
</dbReference>
<dbReference type="HOGENOM" id="CLU_093757_1_0_5"/>
<dbReference type="OrthoDB" id="9802215at2"/>
<dbReference type="GO" id="GO:0005737">
    <property type="term" value="C:cytoplasm"/>
    <property type="evidence" value="ECO:0007669"/>
    <property type="project" value="UniProtKB-SubCell"/>
</dbReference>
<dbReference type="GO" id="GO:0016151">
    <property type="term" value="F:nickel cation binding"/>
    <property type="evidence" value="ECO:0007669"/>
    <property type="project" value="UniProtKB-UniRule"/>
</dbReference>
<dbReference type="GO" id="GO:0051082">
    <property type="term" value="F:unfolded protein binding"/>
    <property type="evidence" value="ECO:0007669"/>
    <property type="project" value="UniProtKB-UniRule"/>
</dbReference>
<dbReference type="GO" id="GO:0006457">
    <property type="term" value="P:protein folding"/>
    <property type="evidence" value="ECO:0007669"/>
    <property type="project" value="InterPro"/>
</dbReference>
<dbReference type="GO" id="GO:0065003">
    <property type="term" value="P:protein-containing complex assembly"/>
    <property type="evidence" value="ECO:0007669"/>
    <property type="project" value="InterPro"/>
</dbReference>
<dbReference type="GO" id="GO:0019627">
    <property type="term" value="P:urea metabolic process"/>
    <property type="evidence" value="ECO:0007669"/>
    <property type="project" value="InterPro"/>
</dbReference>
<dbReference type="CDD" id="cd00571">
    <property type="entry name" value="UreE"/>
    <property type="match status" value="1"/>
</dbReference>
<dbReference type="Gene3D" id="2.60.260.20">
    <property type="entry name" value="Urease metallochaperone UreE, N-terminal domain"/>
    <property type="match status" value="1"/>
</dbReference>
<dbReference type="Gene3D" id="3.30.70.790">
    <property type="entry name" value="UreE, C-terminal domain"/>
    <property type="match status" value="1"/>
</dbReference>
<dbReference type="HAMAP" id="MF_00822">
    <property type="entry name" value="UreE"/>
    <property type="match status" value="1"/>
</dbReference>
<dbReference type="InterPro" id="IPR012406">
    <property type="entry name" value="UreE"/>
</dbReference>
<dbReference type="InterPro" id="IPR007864">
    <property type="entry name" value="UreE_C_dom"/>
</dbReference>
<dbReference type="InterPro" id="IPR004029">
    <property type="entry name" value="UreE_N"/>
</dbReference>
<dbReference type="InterPro" id="IPR036118">
    <property type="entry name" value="UreE_N_sf"/>
</dbReference>
<dbReference type="Pfam" id="PF05194">
    <property type="entry name" value="UreE_C"/>
    <property type="match status" value="1"/>
</dbReference>
<dbReference type="Pfam" id="PF02814">
    <property type="entry name" value="UreE_N"/>
    <property type="match status" value="1"/>
</dbReference>
<dbReference type="SMART" id="SM00988">
    <property type="entry name" value="UreE_N"/>
    <property type="match status" value="1"/>
</dbReference>
<dbReference type="SUPFAM" id="SSF69737">
    <property type="entry name" value="Urease metallochaperone UreE, C-terminal domain"/>
    <property type="match status" value="1"/>
</dbReference>
<dbReference type="SUPFAM" id="SSF69287">
    <property type="entry name" value="Urease metallochaperone UreE, N-terminal domain"/>
    <property type="match status" value="1"/>
</dbReference>
<accession>Q210G0</accession>
<evidence type="ECO:0000255" key="1">
    <source>
        <dbReference type="HAMAP-Rule" id="MF_00822"/>
    </source>
</evidence>
<evidence type="ECO:0000256" key="2">
    <source>
        <dbReference type="SAM" id="MobiDB-lite"/>
    </source>
</evidence>
<reference key="1">
    <citation type="submission" date="2006-03" db="EMBL/GenBank/DDBJ databases">
        <title>Complete sequence of Rhodopseudomonas palustris BisB18.</title>
        <authorList>
            <consortium name="US DOE Joint Genome Institute"/>
            <person name="Copeland A."/>
            <person name="Lucas S."/>
            <person name="Lapidus A."/>
            <person name="Barry K."/>
            <person name="Detter J.C."/>
            <person name="Glavina del Rio T."/>
            <person name="Hammon N."/>
            <person name="Israni S."/>
            <person name="Dalin E."/>
            <person name="Tice H."/>
            <person name="Pitluck S."/>
            <person name="Chain P."/>
            <person name="Malfatti S."/>
            <person name="Shin M."/>
            <person name="Vergez L."/>
            <person name="Schmutz J."/>
            <person name="Larimer F."/>
            <person name="Land M."/>
            <person name="Hauser L."/>
            <person name="Pelletier D.A."/>
            <person name="Kyrpides N."/>
            <person name="Anderson I."/>
            <person name="Oda Y."/>
            <person name="Harwood C.S."/>
            <person name="Richardson P."/>
        </authorList>
    </citation>
    <scope>NUCLEOTIDE SEQUENCE [LARGE SCALE GENOMIC DNA]</scope>
    <source>
        <strain>BisB18</strain>
    </source>
</reference>
<gene>
    <name evidence="1" type="primary">ureE</name>
    <name type="ordered locus">RPC_3691</name>
</gene>
<sequence length="211" mass="23557">MIRATSVKGQHRWSEAAADTVVLDFDDRHRRRTAMVGTRGLQFLLDLEHAVALRGGDALVLEDGRLVEVVAAAEPLIEIRGSDPKELVRIAWHLGNRHLPTQIMAKGLRIRRDHVIEEMVQGLGAKTVEIEAPFDPEGGAYAPPAEPSHDHAGHDHAHDSHAHHDHDHGKHAQHDHGKHDHAHHDHAAHDDHHVHDEHCGHDHHGHGHEHK</sequence>
<keyword id="KW-0143">Chaperone</keyword>
<keyword id="KW-0963">Cytoplasm</keyword>
<keyword id="KW-0533">Nickel</keyword>
<keyword id="KW-0996">Nickel insertion</keyword>
<name>UREE_RHOPB</name>